<proteinExistence type="inferred from homology"/>
<reference key="1">
    <citation type="journal article" date="2009" name="PLoS ONE">
        <title>Complete genome sequence of Francisella tularensis subspecies holarctica FTNF002-00.</title>
        <authorList>
            <person name="Barabote R.D."/>
            <person name="Xie G."/>
            <person name="Brettin T.S."/>
            <person name="Hinrichs S.H."/>
            <person name="Fey P.D."/>
            <person name="Jay J.J."/>
            <person name="Engle J.L."/>
            <person name="Godbole S.D."/>
            <person name="Noronha J.M."/>
            <person name="Scheuermann R.H."/>
            <person name="Zhou L.W."/>
            <person name="Lion C."/>
            <person name="Dempsey M.P."/>
        </authorList>
    </citation>
    <scope>NUCLEOTIDE SEQUENCE [LARGE SCALE GENOMIC DNA]</scope>
    <source>
        <strain>FTNF002-00 / FTA</strain>
    </source>
</reference>
<organism>
    <name type="scientific">Francisella tularensis subsp. holarctica (strain FTNF002-00 / FTA)</name>
    <dbReference type="NCBI Taxonomy" id="458234"/>
    <lineage>
        <taxon>Bacteria</taxon>
        <taxon>Pseudomonadati</taxon>
        <taxon>Pseudomonadota</taxon>
        <taxon>Gammaproteobacteria</taxon>
        <taxon>Thiotrichales</taxon>
        <taxon>Francisellaceae</taxon>
        <taxon>Francisella</taxon>
    </lineage>
</organism>
<sequence>MAHKKAGGSTRNGRDSNPKYLGVKRYGGELVKAGTIIIRQRGTKTHPGVNVGCGKDHTLFALKDGTVKFHTGGALNRKFVSIEE</sequence>
<gene>
    <name evidence="1" type="primary">rpmA</name>
    <name type="ordered locus">FTA_1539</name>
</gene>
<protein>
    <recommendedName>
        <fullName evidence="1">Large ribosomal subunit protein bL27</fullName>
    </recommendedName>
    <alternativeName>
        <fullName evidence="3">50S ribosomal protein L27</fullName>
    </alternativeName>
</protein>
<evidence type="ECO:0000255" key="1">
    <source>
        <dbReference type="HAMAP-Rule" id="MF_00539"/>
    </source>
</evidence>
<evidence type="ECO:0000256" key="2">
    <source>
        <dbReference type="SAM" id="MobiDB-lite"/>
    </source>
</evidence>
<evidence type="ECO:0000305" key="3"/>
<name>RL27_FRATF</name>
<feature type="chain" id="PRO_1000017482" description="Large ribosomal subunit protein bL27">
    <location>
        <begin position="1"/>
        <end position="84"/>
    </location>
</feature>
<feature type="region of interest" description="Disordered" evidence="2">
    <location>
        <begin position="1"/>
        <end position="21"/>
    </location>
</feature>
<accession>A7NDG1</accession>
<keyword id="KW-0687">Ribonucleoprotein</keyword>
<keyword id="KW-0689">Ribosomal protein</keyword>
<dbReference type="EMBL" id="CP000803">
    <property type="protein sequence ID" value="ABU62014.1"/>
    <property type="molecule type" value="Genomic_DNA"/>
</dbReference>
<dbReference type="RefSeq" id="WP_003016752.1">
    <property type="nucleotide sequence ID" value="NC_009749.1"/>
</dbReference>
<dbReference type="SMR" id="A7NDG1"/>
<dbReference type="KEGG" id="fta:FTA_1539"/>
<dbReference type="HOGENOM" id="CLU_095424_4_1_6"/>
<dbReference type="GO" id="GO:0022625">
    <property type="term" value="C:cytosolic large ribosomal subunit"/>
    <property type="evidence" value="ECO:0007669"/>
    <property type="project" value="TreeGrafter"/>
</dbReference>
<dbReference type="GO" id="GO:0003735">
    <property type="term" value="F:structural constituent of ribosome"/>
    <property type="evidence" value="ECO:0007669"/>
    <property type="project" value="InterPro"/>
</dbReference>
<dbReference type="GO" id="GO:0006412">
    <property type="term" value="P:translation"/>
    <property type="evidence" value="ECO:0007669"/>
    <property type="project" value="UniProtKB-UniRule"/>
</dbReference>
<dbReference type="FunFam" id="2.40.50.100:FF:000001">
    <property type="entry name" value="50S ribosomal protein L27"/>
    <property type="match status" value="1"/>
</dbReference>
<dbReference type="Gene3D" id="2.40.50.100">
    <property type="match status" value="1"/>
</dbReference>
<dbReference type="HAMAP" id="MF_00539">
    <property type="entry name" value="Ribosomal_bL27"/>
    <property type="match status" value="1"/>
</dbReference>
<dbReference type="InterPro" id="IPR001684">
    <property type="entry name" value="Ribosomal_bL27"/>
</dbReference>
<dbReference type="InterPro" id="IPR018261">
    <property type="entry name" value="Ribosomal_bL27_CS"/>
</dbReference>
<dbReference type="NCBIfam" id="TIGR00062">
    <property type="entry name" value="L27"/>
    <property type="match status" value="1"/>
</dbReference>
<dbReference type="PANTHER" id="PTHR15893:SF0">
    <property type="entry name" value="LARGE RIBOSOMAL SUBUNIT PROTEIN BL27M"/>
    <property type="match status" value="1"/>
</dbReference>
<dbReference type="PANTHER" id="PTHR15893">
    <property type="entry name" value="RIBOSOMAL PROTEIN L27"/>
    <property type="match status" value="1"/>
</dbReference>
<dbReference type="Pfam" id="PF01016">
    <property type="entry name" value="Ribosomal_L27"/>
    <property type="match status" value="1"/>
</dbReference>
<dbReference type="PRINTS" id="PR00063">
    <property type="entry name" value="RIBOSOMALL27"/>
</dbReference>
<dbReference type="SUPFAM" id="SSF110324">
    <property type="entry name" value="Ribosomal L27 protein-like"/>
    <property type="match status" value="1"/>
</dbReference>
<dbReference type="PROSITE" id="PS00831">
    <property type="entry name" value="RIBOSOMAL_L27"/>
    <property type="match status" value="1"/>
</dbReference>
<comment type="similarity">
    <text evidence="1">Belongs to the bacterial ribosomal protein bL27 family.</text>
</comment>